<dbReference type="EMBL" id="CP000438">
    <property type="protein sequence ID" value="ABJ15649.1"/>
    <property type="molecule type" value="Genomic_DNA"/>
</dbReference>
<dbReference type="RefSeq" id="WP_003116109.1">
    <property type="nucleotide sequence ID" value="NZ_CP034244.1"/>
</dbReference>
<dbReference type="SMR" id="Q02FF5"/>
<dbReference type="KEGG" id="pau:PA14_64335"/>
<dbReference type="PseudoCAP" id="PA14_64335"/>
<dbReference type="HOGENOM" id="CLU_056339_0_0_6"/>
<dbReference type="BioCyc" id="PAER208963:G1G74-5435-MONOMER"/>
<dbReference type="Proteomes" id="UP000000653">
    <property type="component" value="Chromosome"/>
</dbReference>
<dbReference type="GO" id="GO:0005737">
    <property type="term" value="C:cytoplasm"/>
    <property type="evidence" value="ECO:0007669"/>
    <property type="project" value="UniProtKB-SubCell"/>
</dbReference>
<dbReference type="GO" id="GO:0016151">
    <property type="term" value="F:nickel cation binding"/>
    <property type="evidence" value="ECO:0007669"/>
    <property type="project" value="UniProtKB-UniRule"/>
</dbReference>
<dbReference type="HAMAP" id="MF_01384">
    <property type="entry name" value="UreD"/>
    <property type="match status" value="1"/>
</dbReference>
<dbReference type="InterPro" id="IPR002669">
    <property type="entry name" value="UreD"/>
</dbReference>
<dbReference type="PANTHER" id="PTHR33643">
    <property type="entry name" value="UREASE ACCESSORY PROTEIN D"/>
    <property type="match status" value="1"/>
</dbReference>
<dbReference type="PANTHER" id="PTHR33643:SF1">
    <property type="entry name" value="UREASE ACCESSORY PROTEIN D"/>
    <property type="match status" value="1"/>
</dbReference>
<dbReference type="Pfam" id="PF01774">
    <property type="entry name" value="UreD"/>
    <property type="match status" value="1"/>
</dbReference>
<name>URED_PSEAB</name>
<proteinExistence type="inferred from homology"/>
<evidence type="ECO:0000255" key="1">
    <source>
        <dbReference type="HAMAP-Rule" id="MF_01384"/>
    </source>
</evidence>
<reference key="1">
    <citation type="journal article" date="2006" name="Genome Biol.">
        <title>Genomic analysis reveals that Pseudomonas aeruginosa virulence is combinatorial.</title>
        <authorList>
            <person name="Lee D.G."/>
            <person name="Urbach J.M."/>
            <person name="Wu G."/>
            <person name="Liberati N.T."/>
            <person name="Feinbaum R.L."/>
            <person name="Miyata S."/>
            <person name="Diggins L.T."/>
            <person name="He J."/>
            <person name="Saucier M."/>
            <person name="Deziel E."/>
            <person name="Friedman L."/>
            <person name="Li L."/>
            <person name="Grills G."/>
            <person name="Montgomery K."/>
            <person name="Kucherlapati R."/>
            <person name="Rahme L.G."/>
            <person name="Ausubel F.M."/>
        </authorList>
    </citation>
    <scope>NUCLEOTIDE SEQUENCE [LARGE SCALE GENOMIC DNA]</scope>
    <source>
        <strain>UCBPP-PA14</strain>
    </source>
</reference>
<accession>Q02FF5</accession>
<protein>
    <recommendedName>
        <fullName evidence="1">Urease accessory protein UreD</fullName>
    </recommendedName>
</protein>
<gene>
    <name evidence="1" type="primary">ureD</name>
    <name type="ordered locus">PA14_64335</name>
</gene>
<keyword id="KW-0143">Chaperone</keyword>
<keyword id="KW-0963">Cytoplasm</keyword>
<keyword id="KW-0996">Nickel insertion</keyword>
<comment type="function">
    <text evidence="1">Required for maturation of urease via the functional incorporation of the urease nickel metallocenter.</text>
</comment>
<comment type="subunit">
    <text evidence="1">UreD, UreF and UreG form a complex that acts as a GTP-hydrolysis-dependent molecular chaperone, activating the urease apoprotein by helping to assemble the nickel containing metallocenter of UreC. The UreE protein probably delivers the nickel.</text>
</comment>
<comment type="subcellular location">
    <subcellularLocation>
        <location evidence="1">Cytoplasm</location>
    </subcellularLocation>
</comment>
<comment type="similarity">
    <text evidence="1">Belongs to the UreD family.</text>
</comment>
<organism>
    <name type="scientific">Pseudomonas aeruginosa (strain UCBPP-PA14)</name>
    <dbReference type="NCBI Taxonomy" id="208963"/>
    <lineage>
        <taxon>Bacteria</taxon>
        <taxon>Pseudomonadati</taxon>
        <taxon>Pseudomonadota</taxon>
        <taxon>Gammaproteobacteria</taxon>
        <taxon>Pseudomonadales</taxon>
        <taxon>Pseudomonadaceae</taxon>
        <taxon>Pseudomonas</taxon>
    </lineage>
</organism>
<feature type="chain" id="PRO_0000340484" description="Urease accessory protein UreD">
    <location>
        <begin position="1"/>
        <end position="280"/>
    </location>
</feature>
<sequence length="280" mass="30775">MTAALPDLSFHPAWHAQLELAYARAGDATRPVTRRHAGPLRVQKHLYAEGPEVCQHILVHPPGGIAGGDSLAFDVRLGERAWAQLTSPGAAKWYRAACPSRQTLEIHLEPGATLEWLPQESIVFAGAQAELETRIQLRGDARLFYWDMVALGRPASGERFASGHFVAALDIRRDDRLLWHERQRIDGGDRLLDSPIGLAGHPVLATLVASGEIDTDLLQRCRALPCAGRGNLSQLPGGLLVARCLADEALHARAWLIELWRLLRPALLGREAVPPRIWST</sequence>